<protein>
    <recommendedName>
        <fullName evidence="1">Protein-methionine-sulfoxide reductase catalytic subunit MsrP</fullName>
        <ecNumber evidence="1">1.8.5.-</ecNumber>
    </recommendedName>
</protein>
<name>MSRP_ECO5E</name>
<dbReference type="EC" id="1.8.5.-" evidence="1"/>
<dbReference type="EMBL" id="CP001164">
    <property type="protein sequence ID" value="ACI36822.1"/>
    <property type="molecule type" value="Genomic_DNA"/>
</dbReference>
<dbReference type="RefSeq" id="WP_000740078.1">
    <property type="nucleotide sequence ID" value="NC_011353.1"/>
</dbReference>
<dbReference type="SMR" id="B5YSJ7"/>
<dbReference type="KEGG" id="ecf:ECH74115_2750"/>
<dbReference type="HOGENOM" id="CLU_045520_0_0_6"/>
<dbReference type="GO" id="GO:0042597">
    <property type="term" value="C:periplasmic space"/>
    <property type="evidence" value="ECO:0007669"/>
    <property type="project" value="UniProtKB-SubCell"/>
</dbReference>
<dbReference type="GO" id="GO:0046872">
    <property type="term" value="F:metal ion binding"/>
    <property type="evidence" value="ECO:0007669"/>
    <property type="project" value="UniProtKB-KW"/>
</dbReference>
<dbReference type="GO" id="GO:0043546">
    <property type="term" value="F:molybdopterin cofactor binding"/>
    <property type="evidence" value="ECO:0007669"/>
    <property type="project" value="UniProtKB-UniRule"/>
</dbReference>
<dbReference type="GO" id="GO:0016672">
    <property type="term" value="F:oxidoreductase activity, acting on a sulfur group of donors, quinone or similar compound as acceptor"/>
    <property type="evidence" value="ECO:0007669"/>
    <property type="project" value="UniProtKB-UniRule"/>
</dbReference>
<dbReference type="GO" id="GO:0030091">
    <property type="term" value="P:protein repair"/>
    <property type="evidence" value="ECO:0007669"/>
    <property type="project" value="UniProtKB-UniRule"/>
</dbReference>
<dbReference type="CDD" id="cd02107">
    <property type="entry name" value="YedY_like_Moco"/>
    <property type="match status" value="1"/>
</dbReference>
<dbReference type="FunFam" id="3.90.420.10:FF:000001">
    <property type="entry name" value="Protein-methionine-sulfoxide reductase catalytic subunit MsrP"/>
    <property type="match status" value="1"/>
</dbReference>
<dbReference type="Gene3D" id="3.90.420.10">
    <property type="entry name" value="Oxidoreductase, molybdopterin-binding domain"/>
    <property type="match status" value="1"/>
</dbReference>
<dbReference type="HAMAP" id="MF_01206">
    <property type="entry name" value="MsrP"/>
    <property type="match status" value="1"/>
</dbReference>
<dbReference type="InterPro" id="IPR022867">
    <property type="entry name" value="MsrP"/>
</dbReference>
<dbReference type="InterPro" id="IPR000572">
    <property type="entry name" value="OxRdtase_Mopterin-bd_dom"/>
</dbReference>
<dbReference type="InterPro" id="IPR036374">
    <property type="entry name" value="OxRdtase_Mopterin-bd_sf"/>
</dbReference>
<dbReference type="InterPro" id="IPR006311">
    <property type="entry name" value="TAT_signal"/>
</dbReference>
<dbReference type="NCBIfam" id="NF003767">
    <property type="entry name" value="PRK05363.1"/>
    <property type="match status" value="1"/>
</dbReference>
<dbReference type="PANTHER" id="PTHR43032">
    <property type="entry name" value="PROTEIN-METHIONINE-SULFOXIDE REDUCTASE"/>
    <property type="match status" value="1"/>
</dbReference>
<dbReference type="PANTHER" id="PTHR43032:SF3">
    <property type="entry name" value="PROTEIN-METHIONINE-SULFOXIDE REDUCTASE CATALYTIC SUBUNIT MSRP"/>
    <property type="match status" value="1"/>
</dbReference>
<dbReference type="Pfam" id="PF00174">
    <property type="entry name" value="Oxidored_molyb"/>
    <property type="match status" value="1"/>
</dbReference>
<dbReference type="SUPFAM" id="SSF56524">
    <property type="entry name" value="Oxidoreductase molybdopterin-binding domain"/>
    <property type="match status" value="1"/>
</dbReference>
<dbReference type="PROSITE" id="PS51318">
    <property type="entry name" value="TAT"/>
    <property type="match status" value="1"/>
</dbReference>
<keyword id="KW-0479">Metal-binding</keyword>
<keyword id="KW-0500">Molybdenum</keyword>
<keyword id="KW-0560">Oxidoreductase</keyword>
<keyword id="KW-0574">Periplasm</keyword>
<keyword id="KW-0732">Signal</keyword>
<organism>
    <name type="scientific">Escherichia coli O157:H7 (strain EC4115 / EHEC)</name>
    <dbReference type="NCBI Taxonomy" id="444450"/>
    <lineage>
        <taxon>Bacteria</taxon>
        <taxon>Pseudomonadati</taxon>
        <taxon>Pseudomonadota</taxon>
        <taxon>Gammaproteobacteria</taxon>
        <taxon>Enterobacterales</taxon>
        <taxon>Enterobacteriaceae</taxon>
        <taxon>Escherichia</taxon>
    </lineage>
</organism>
<comment type="function">
    <text evidence="1">Part of the MsrPQ system that repairs oxidized periplasmic proteins containing methionine sulfoxide residues (Met-O), using respiratory chain electrons. Thus protects these proteins from oxidative-stress damage caused by reactive species of oxygen and chlorine generated by the host defense mechanisms. MsrPQ is essential for the maintenance of envelope integrity under bleach stress, rescuing a wide series of structurally unrelated periplasmic proteins from methionine oxidation, including the primary periplasmic chaperone SurA and the lipoprotein Pal. The catalytic subunit MsrP is non-stereospecific, being able to reduce both (R-) and (S-) diastereoisomers of methionine sulfoxide.</text>
</comment>
<comment type="catalytic activity">
    <reaction evidence="1">
        <text>L-methionyl-[protein] + a quinone + H2O = L-methionyl-(S)-S-oxide-[protein] + a quinol</text>
        <dbReference type="Rhea" id="RHEA:51292"/>
        <dbReference type="Rhea" id="RHEA-COMP:12313"/>
        <dbReference type="Rhea" id="RHEA-COMP:12315"/>
        <dbReference type="ChEBI" id="CHEBI:15377"/>
        <dbReference type="ChEBI" id="CHEBI:16044"/>
        <dbReference type="ChEBI" id="CHEBI:24646"/>
        <dbReference type="ChEBI" id="CHEBI:44120"/>
        <dbReference type="ChEBI" id="CHEBI:132124"/>
    </reaction>
</comment>
<comment type="catalytic activity">
    <reaction evidence="1">
        <text>L-methionyl-[protein] + a quinone + H2O = L-methionyl-(R)-S-oxide-[protein] + a quinol</text>
        <dbReference type="Rhea" id="RHEA:51296"/>
        <dbReference type="Rhea" id="RHEA-COMP:12313"/>
        <dbReference type="Rhea" id="RHEA-COMP:12314"/>
        <dbReference type="ChEBI" id="CHEBI:15377"/>
        <dbReference type="ChEBI" id="CHEBI:16044"/>
        <dbReference type="ChEBI" id="CHEBI:24646"/>
        <dbReference type="ChEBI" id="CHEBI:45764"/>
        <dbReference type="ChEBI" id="CHEBI:132124"/>
    </reaction>
</comment>
<comment type="cofactor">
    <cofactor evidence="1">
        <name>Mo-molybdopterin</name>
        <dbReference type="ChEBI" id="CHEBI:71302"/>
    </cofactor>
    <text evidence="1">Binds 1 Mo-molybdopterin (Mo-MPT) cofactor per subunit.</text>
</comment>
<comment type="subunit">
    <text evidence="1">Heterodimer of a catalytic subunit (MsrP) and a heme-binding subunit (MsrQ).</text>
</comment>
<comment type="subcellular location">
    <subcellularLocation>
        <location evidence="1">Periplasm</location>
    </subcellularLocation>
    <text evidence="1">Is attached to the inner membrane when interacting with the MsrQ subunit.</text>
</comment>
<comment type="PTM">
    <text evidence="1">Predicted to be exported by the Tat system. The position of the signal peptide cleavage has not been experimentally proven.</text>
</comment>
<comment type="similarity">
    <text evidence="1">Belongs to the MsrP family.</text>
</comment>
<reference key="1">
    <citation type="journal article" date="2011" name="Proc. Natl. Acad. Sci. U.S.A.">
        <title>Genomic anatomy of Escherichia coli O157:H7 outbreaks.</title>
        <authorList>
            <person name="Eppinger M."/>
            <person name="Mammel M.K."/>
            <person name="Leclerc J.E."/>
            <person name="Ravel J."/>
            <person name="Cebula T.A."/>
        </authorList>
    </citation>
    <scope>NUCLEOTIDE SEQUENCE [LARGE SCALE GENOMIC DNA]</scope>
    <source>
        <strain>EC4115 / EHEC</strain>
    </source>
</reference>
<gene>
    <name evidence="1" type="primary">msrP</name>
    <name type="ordered locus">ECH74115_2750</name>
</gene>
<evidence type="ECO:0000255" key="1">
    <source>
        <dbReference type="HAMAP-Rule" id="MF_01206"/>
    </source>
</evidence>
<sequence>MKKNQFLKESDVTAESVFFMKRRQVLKALGISAAALSLPHAAHADLLSWFKGNDRPPAPAGKALEFSKPAAWQNNLPLTPADKVSGYNNFYEFGLDKADPAANAGSLKTDPWTLKISGEVAKPLTLDHDDLTRRFPLEERIYRMRCVEAWSMVVPWIGFPLHKLLALAEPTSNAKYVAFETIYAPEQMPGQQDRFIGGGLKYPYVEGLRLDEAMHPLTLMTVGVYGKALPPQNGAPVRLIVPWKYGFKGIKSIVSIKLTRERPPTTWNLAAPDEYGFYANVNPHVDHPRWSQATERFIGSGGILDVQRQPTLLFNGYADQVASLYRGLDLRENF</sequence>
<accession>B5YSJ7</accession>
<proteinExistence type="inferred from homology"/>
<feature type="signal peptide" description="Tat-type signal" evidence="1">
    <location>
        <begin position="1"/>
        <end position="44"/>
    </location>
</feature>
<feature type="chain" id="PRO_1000138710" description="Protein-methionine-sulfoxide reductase catalytic subunit MsrP" evidence="1">
    <location>
        <begin position="45"/>
        <end position="334"/>
    </location>
</feature>
<feature type="binding site" evidence="1">
    <location>
        <position position="88"/>
    </location>
    <ligand>
        <name>Mo-molybdopterin</name>
        <dbReference type="ChEBI" id="CHEBI:71302"/>
    </ligand>
</feature>
<feature type="binding site" evidence="1">
    <location>
        <begin position="91"/>
        <end position="92"/>
    </location>
    <ligand>
        <name>Mo-molybdopterin</name>
        <dbReference type="ChEBI" id="CHEBI:71302"/>
    </ligand>
</feature>
<feature type="binding site" evidence="1">
    <location>
        <position position="146"/>
    </location>
    <ligand>
        <name>Mo-molybdopterin</name>
        <dbReference type="ChEBI" id="CHEBI:71302"/>
    </ligand>
    <ligandPart>
        <name>Mo</name>
        <dbReference type="ChEBI" id="CHEBI:28685"/>
    </ligandPart>
</feature>
<feature type="binding site" evidence="1">
    <location>
        <position position="181"/>
    </location>
    <ligand>
        <name>Mo-molybdopterin</name>
        <dbReference type="ChEBI" id="CHEBI:71302"/>
    </ligand>
</feature>
<feature type="binding site" evidence="1">
    <location>
        <position position="233"/>
    </location>
    <ligand>
        <name>Mo-molybdopterin</name>
        <dbReference type="ChEBI" id="CHEBI:71302"/>
    </ligand>
</feature>
<feature type="binding site" evidence="1">
    <location>
        <position position="238"/>
    </location>
    <ligand>
        <name>Mo-molybdopterin</name>
        <dbReference type="ChEBI" id="CHEBI:71302"/>
    </ligand>
</feature>
<feature type="binding site" evidence="1">
    <location>
        <begin position="249"/>
        <end position="251"/>
    </location>
    <ligand>
        <name>Mo-molybdopterin</name>
        <dbReference type="ChEBI" id="CHEBI:71302"/>
    </ligand>
</feature>